<feature type="chain" id="PRO_0000208974" description="Ribonuclease T">
    <location>
        <begin position="1"/>
        <end position="222"/>
    </location>
</feature>
<feature type="domain" description="Exonuclease" evidence="1">
    <location>
        <begin position="20"/>
        <end position="194"/>
    </location>
</feature>
<feature type="active site" description="Proton donor/acceptor" evidence="1">
    <location>
        <position position="181"/>
    </location>
</feature>
<feature type="binding site" evidence="1">
    <location>
        <position position="23"/>
    </location>
    <ligand>
        <name>Mg(2+)</name>
        <dbReference type="ChEBI" id="CHEBI:18420"/>
        <label>1</label>
        <note>catalytic</note>
    </ligand>
</feature>
<feature type="binding site" evidence="1">
    <location>
        <position position="23"/>
    </location>
    <ligand>
        <name>Mg(2+)</name>
        <dbReference type="ChEBI" id="CHEBI:18420"/>
        <label>2</label>
        <note>catalytic</note>
    </ligand>
</feature>
<feature type="binding site" evidence="1">
    <location>
        <position position="25"/>
    </location>
    <ligand>
        <name>Mg(2+)</name>
        <dbReference type="ChEBI" id="CHEBI:18420"/>
        <label>2</label>
        <note>catalytic</note>
    </ligand>
</feature>
<feature type="binding site" evidence="1">
    <location>
        <position position="181"/>
    </location>
    <ligand>
        <name>Mg(2+)</name>
        <dbReference type="ChEBI" id="CHEBI:18420"/>
        <label>2</label>
        <note>catalytic</note>
    </ligand>
</feature>
<feature type="binding site" evidence="1">
    <location>
        <position position="186"/>
    </location>
    <ligand>
        <name>Mg(2+)</name>
        <dbReference type="ChEBI" id="CHEBI:18420"/>
        <label>2</label>
        <note>catalytic</note>
    </ligand>
</feature>
<feature type="site" description="Important for substrate binding and specificity" evidence="1">
    <location>
        <position position="29"/>
    </location>
</feature>
<feature type="site" description="Important for substrate binding and specificity" evidence="1">
    <location>
        <position position="77"/>
    </location>
</feature>
<feature type="site" description="Important for substrate binding and specificity" evidence="1">
    <location>
        <position position="124"/>
    </location>
</feature>
<feature type="site" description="Important for substrate binding and specificity" evidence="1">
    <location>
        <position position="146"/>
    </location>
</feature>
<reference key="1">
    <citation type="journal article" date="2002" name="Nat. Biotechnol.">
        <title>Genome sequence of the dissimilatory metal ion-reducing bacterium Shewanella oneidensis.</title>
        <authorList>
            <person name="Heidelberg J.F."/>
            <person name="Paulsen I.T."/>
            <person name="Nelson K.E."/>
            <person name="Gaidos E.J."/>
            <person name="Nelson W.C."/>
            <person name="Read T.D."/>
            <person name="Eisen J.A."/>
            <person name="Seshadri R."/>
            <person name="Ward N.L."/>
            <person name="Methe B.A."/>
            <person name="Clayton R.A."/>
            <person name="Meyer T."/>
            <person name="Tsapin A."/>
            <person name="Scott J."/>
            <person name="Beanan M.J."/>
            <person name="Brinkac L.M."/>
            <person name="Daugherty S.C."/>
            <person name="DeBoy R.T."/>
            <person name="Dodson R.J."/>
            <person name="Durkin A.S."/>
            <person name="Haft D.H."/>
            <person name="Kolonay J.F."/>
            <person name="Madupu R."/>
            <person name="Peterson J.D."/>
            <person name="Umayam L.A."/>
            <person name="White O."/>
            <person name="Wolf A.M."/>
            <person name="Vamathevan J.J."/>
            <person name="Weidman J.F."/>
            <person name="Impraim M."/>
            <person name="Lee K."/>
            <person name="Berry K.J."/>
            <person name="Lee C."/>
            <person name="Mueller J."/>
            <person name="Khouri H.M."/>
            <person name="Gill J."/>
            <person name="Utterback T.R."/>
            <person name="McDonald L.A."/>
            <person name="Feldblyum T.V."/>
            <person name="Smith H.O."/>
            <person name="Venter J.C."/>
            <person name="Nealson K.H."/>
            <person name="Fraser C.M."/>
        </authorList>
    </citation>
    <scope>NUCLEOTIDE SEQUENCE [LARGE SCALE GENOMIC DNA]</scope>
    <source>
        <strain>ATCC 700550 / JCM 31522 / CIP 106686 / LMG 19005 / NCIMB 14063 / MR-1</strain>
    </source>
</reference>
<gene>
    <name evidence="1" type="primary">rnt</name>
    <name type="ordered locus">SO_2755</name>
</gene>
<organism>
    <name type="scientific">Shewanella oneidensis (strain ATCC 700550 / JCM 31522 / CIP 106686 / LMG 19005 / NCIMB 14063 / MR-1)</name>
    <dbReference type="NCBI Taxonomy" id="211586"/>
    <lineage>
        <taxon>Bacteria</taxon>
        <taxon>Pseudomonadati</taxon>
        <taxon>Pseudomonadota</taxon>
        <taxon>Gammaproteobacteria</taxon>
        <taxon>Alteromonadales</taxon>
        <taxon>Shewanellaceae</taxon>
        <taxon>Shewanella</taxon>
    </lineage>
</organism>
<keyword id="KW-0269">Exonuclease</keyword>
<keyword id="KW-0378">Hydrolase</keyword>
<keyword id="KW-0460">Magnesium</keyword>
<keyword id="KW-0479">Metal-binding</keyword>
<keyword id="KW-0540">Nuclease</keyword>
<keyword id="KW-1185">Reference proteome</keyword>
<keyword id="KW-0819">tRNA processing</keyword>
<comment type="function">
    <text evidence="1">Trims short 3' overhangs of a variety of RNA species, leaving a one or two nucleotide 3' overhang. Responsible for the end-turnover of tRNA: specifically removes the terminal AMP residue from uncharged tRNA (tRNA-C-C-A). Also appears to be involved in tRNA biosynthesis.</text>
</comment>
<comment type="cofactor">
    <cofactor evidence="1">
        <name>Mg(2+)</name>
        <dbReference type="ChEBI" id="CHEBI:18420"/>
    </cofactor>
    <text evidence="1">Binds two Mg(2+) per subunit. The active form of the enzyme binds two Mg(2+) ions in its active site. The first Mg(2+) forms only one salt bridge with the protein.</text>
</comment>
<comment type="subunit">
    <text evidence="1">Homodimer.</text>
</comment>
<comment type="similarity">
    <text evidence="1">Belongs to the RNase T family.</text>
</comment>
<evidence type="ECO:0000255" key="1">
    <source>
        <dbReference type="HAMAP-Rule" id="MF_00157"/>
    </source>
</evidence>
<dbReference type="EC" id="3.1.13.-" evidence="1"/>
<dbReference type="EMBL" id="AE014299">
    <property type="protein sequence ID" value="AAN55782.1"/>
    <property type="molecule type" value="Genomic_DNA"/>
</dbReference>
<dbReference type="RefSeq" id="NP_718338.1">
    <property type="nucleotide sequence ID" value="NC_004347.2"/>
</dbReference>
<dbReference type="RefSeq" id="WP_011072694.1">
    <property type="nucleotide sequence ID" value="NC_004347.2"/>
</dbReference>
<dbReference type="SMR" id="Q8EDJ2"/>
<dbReference type="STRING" id="211586.SO_2755"/>
<dbReference type="PaxDb" id="211586-SO_2755"/>
<dbReference type="KEGG" id="son:SO_2755"/>
<dbReference type="PATRIC" id="fig|211586.12.peg.2655"/>
<dbReference type="eggNOG" id="COG0847">
    <property type="taxonomic scope" value="Bacteria"/>
</dbReference>
<dbReference type="HOGENOM" id="CLU_082724_0_0_6"/>
<dbReference type="OrthoDB" id="9778264at2"/>
<dbReference type="PhylomeDB" id="Q8EDJ2"/>
<dbReference type="BioCyc" id="SONE211586:G1GMP-2542-MONOMER"/>
<dbReference type="Proteomes" id="UP000008186">
    <property type="component" value="Chromosome"/>
</dbReference>
<dbReference type="GO" id="GO:0005829">
    <property type="term" value="C:cytosol"/>
    <property type="evidence" value="ECO:0000318"/>
    <property type="project" value="GO_Central"/>
</dbReference>
<dbReference type="GO" id="GO:0008408">
    <property type="term" value="F:3'-5' exonuclease activity"/>
    <property type="evidence" value="ECO:0000318"/>
    <property type="project" value="GO_Central"/>
</dbReference>
<dbReference type="GO" id="GO:0000287">
    <property type="term" value="F:magnesium ion binding"/>
    <property type="evidence" value="ECO:0007669"/>
    <property type="project" value="UniProtKB-UniRule"/>
</dbReference>
<dbReference type="GO" id="GO:0003676">
    <property type="term" value="F:nucleic acid binding"/>
    <property type="evidence" value="ECO:0007669"/>
    <property type="project" value="InterPro"/>
</dbReference>
<dbReference type="GO" id="GO:0016896">
    <property type="term" value="F:RNA exonuclease activity, producing 5'-phosphomonoesters"/>
    <property type="evidence" value="ECO:0007669"/>
    <property type="project" value="UniProtKB-UniRule"/>
</dbReference>
<dbReference type="GO" id="GO:0045004">
    <property type="term" value="P:DNA replication proofreading"/>
    <property type="evidence" value="ECO:0000318"/>
    <property type="project" value="GO_Central"/>
</dbReference>
<dbReference type="GO" id="GO:0008033">
    <property type="term" value="P:tRNA processing"/>
    <property type="evidence" value="ECO:0007669"/>
    <property type="project" value="UniProtKB-KW"/>
</dbReference>
<dbReference type="CDD" id="cd06134">
    <property type="entry name" value="RNaseT"/>
    <property type="match status" value="1"/>
</dbReference>
<dbReference type="FunFam" id="3.30.420.10:FF:000009">
    <property type="entry name" value="Ribonuclease T"/>
    <property type="match status" value="1"/>
</dbReference>
<dbReference type="Gene3D" id="3.30.420.10">
    <property type="entry name" value="Ribonuclease H-like superfamily/Ribonuclease H"/>
    <property type="match status" value="1"/>
</dbReference>
<dbReference type="HAMAP" id="MF_00157">
    <property type="entry name" value="RNase_T"/>
    <property type="match status" value="1"/>
</dbReference>
<dbReference type="InterPro" id="IPR013520">
    <property type="entry name" value="Exonuclease_RNaseT/DNA_pol3"/>
</dbReference>
<dbReference type="InterPro" id="IPR005987">
    <property type="entry name" value="RNase_T"/>
</dbReference>
<dbReference type="InterPro" id="IPR012337">
    <property type="entry name" value="RNaseH-like_sf"/>
</dbReference>
<dbReference type="InterPro" id="IPR036397">
    <property type="entry name" value="RNaseH_sf"/>
</dbReference>
<dbReference type="NCBIfam" id="TIGR01298">
    <property type="entry name" value="RNaseT"/>
    <property type="match status" value="1"/>
</dbReference>
<dbReference type="PANTHER" id="PTHR30231">
    <property type="entry name" value="DNA POLYMERASE III SUBUNIT EPSILON"/>
    <property type="match status" value="1"/>
</dbReference>
<dbReference type="PANTHER" id="PTHR30231:SF2">
    <property type="entry name" value="RIBONUCLEASE T"/>
    <property type="match status" value="1"/>
</dbReference>
<dbReference type="Pfam" id="PF00929">
    <property type="entry name" value="RNase_T"/>
    <property type="match status" value="1"/>
</dbReference>
<dbReference type="SMART" id="SM00479">
    <property type="entry name" value="EXOIII"/>
    <property type="match status" value="1"/>
</dbReference>
<dbReference type="SUPFAM" id="SSF53098">
    <property type="entry name" value="Ribonuclease H-like"/>
    <property type="match status" value="1"/>
</dbReference>
<accession>Q8EDJ2</accession>
<name>RNT_SHEON</name>
<sequence>MSDICDANKLKHRFRGYFPVVIDVETAGFNSQTDALLEIAVTLLKMDDEGLLGIDKTLHFHIEPFEGANLEPEALAFNGIDPTNPLRGAVSEKDAFLEIFKAVKKAQKASDCHRSIIVAHNAAFDHGFVSKAIERCDLKRSPFHPFATFDTATLAGLAIGHTVLAKACIMAGIPFDNKEAHSALYDTERTAELFCYIVNRWKTLGGWPLLATSESEDMDSEE</sequence>
<proteinExistence type="inferred from homology"/>
<protein>
    <recommendedName>
        <fullName evidence="1">Ribonuclease T</fullName>
        <ecNumber evidence="1">3.1.13.-</ecNumber>
    </recommendedName>
    <alternativeName>
        <fullName evidence="1">Exoribonuclease T</fullName>
        <shortName evidence="1">RNase T</shortName>
    </alternativeName>
</protein>